<reference key="1">
    <citation type="journal article" date="2005" name="Nat. Biotechnol.">
        <title>The genome sequence of the ethanologenic bacterium Zymomonas mobilis ZM4.</title>
        <authorList>
            <person name="Seo J.-S."/>
            <person name="Chong H."/>
            <person name="Park H.S."/>
            <person name="Yoon K.-O."/>
            <person name="Jung C."/>
            <person name="Kim J.J."/>
            <person name="Hong J.H."/>
            <person name="Kim H."/>
            <person name="Kim J.-H."/>
            <person name="Kil J.-I."/>
            <person name="Park C.J."/>
            <person name="Oh H.-M."/>
            <person name="Lee J.-S."/>
            <person name="Jin S.-J."/>
            <person name="Um H.-W."/>
            <person name="Lee H.-J."/>
            <person name="Oh S.-J."/>
            <person name="Kim J.Y."/>
            <person name="Kang H.L."/>
            <person name="Lee S.Y."/>
            <person name="Lee K.J."/>
            <person name="Kang H.S."/>
        </authorList>
    </citation>
    <scope>NUCLEOTIDE SEQUENCE [LARGE SCALE GENOMIC DNA]</scope>
    <source>
        <strain>ATCC 31821 / ZM4 / CP4</strain>
    </source>
</reference>
<protein>
    <recommendedName>
        <fullName evidence="1">DNA gyrase inhibitor YacG</fullName>
    </recommendedName>
</protein>
<dbReference type="EMBL" id="AE008692">
    <property type="protein sequence ID" value="AAV89635.1"/>
    <property type="molecule type" value="Genomic_DNA"/>
</dbReference>
<dbReference type="RefSeq" id="WP_011240860.1">
    <property type="nucleotide sequence ID" value="NZ_CP035711.1"/>
</dbReference>
<dbReference type="SMR" id="Q5NNS5"/>
<dbReference type="STRING" id="264203.ZMO1011"/>
<dbReference type="KEGG" id="zmo:ZMO1011"/>
<dbReference type="eggNOG" id="COG3024">
    <property type="taxonomic scope" value="Bacteria"/>
</dbReference>
<dbReference type="HOGENOM" id="CLU_178280_2_0_5"/>
<dbReference type="Proteomes" id="UP000001173">
    <property type="component" value="Chromosome"/>
</dbReference>
<dbReference type="GO" id="GO:0008657">
    <property type="term" value="F:DNA topoisomerase type II (double strand cut, ATP-hydrolyzing) inhibitor activity"/>
    <property type="evidence" value="ECO:0007669"/>
    <property type="project" value="UniProtKB-UniRule"/>
</dbReference>
<dbReference type="GO" id="GO:0008270">
    <property type="term" value="F:zinc ion binding"/>
    <property type="evidence" value="ECO:0007669"/>
    <property type="project" value="UniProtKB-UniRule"/>
</dbReference>
<dbReference type="GO" id="GO:0006355">
    <property type="term" value="P:regulation of DNA-templated transcription"/>
    <property type="evidence" value="ECO:0007669"/>
    <property type="project" value="InterPro"/>
</dbReference>
<dbReference type="Gene3D" id="3.30.50.10">
    <property type="entry name" value="Erythroid Transcription Factor GATA-1, subunit A"/>
    <property type="match status" value="1"/>
</dbReference>
<dbReference type="HAMAP" id="MF_00649">
    <property type="entry name" value="DNA_gyrase_inhibitor_YacG"/>
    <property type="match status" value="1"/>
</dbReference>
<dbReference type="InterPro" id="IPR005584">
    <property type="entry name" value="DNA_gyrase_inhibitor_YacG"/>
</dbReference>
<dbReference type="InterPro" id="IPR013088">
    <property type="entry name" value="Znf_NHR/GATA"/>
</dbReference>
<dbReference type="PANTHER" id="PTHR36150">
    <property type="entry name" value="DNA GYRASE INHIBITOR YACG"/>
    <property type="match status" value="1"/>
</dbReference>
<dbReference type="PANTHER" id="PTHR36150:SF1">
    <property type="entry name" value="DNA GYRASE INHIBITOR YACG"/>
    <property type="match status" value="1"/>
</dbReference>
<dbReference type="Pfam" id="PF03884">
    <property type="entry name" value="YacG"/>
    <property type="match status" value="1"/>
</dbReference>
<dbReference type="SUPFAM" id="SSF57716">
    <property type="entry name" value="Glucocorticoid receptor-like (DNA-binding domain)"/>
    <property type="match status" value="1"/>
</dbReference>
<evidence type="ECO:0000255" key="1">
    <source>
        <dbReference type="HAMAP-Rule" id="MF_00649"/>
    </source>
</evidence>
<gene>
    <name evidence="1" type="primary">yacG</name>
    <name type="ordered locus">ZMO1011</name>
</gene>
<sequence>MPSATRKNAPKGKCPICGAPTKAEFRPFCSRGCRDRDLLNWLGDAYRLPVKDLQAEDGDFD</sequence>
<keyword id="KW-0479">Metal-binding</keyword>
<keyword id="KW-1185">Reference proteome</keyword>
<keyword id="KW-0862">Zinc</keyword>
<organism>
    <name type="scientific">Zymomonas mobilis subsp. mobilis (strain ATCC 31821 / ZM4 / CP4)</name>
    <dbReference type="NCBI Taxonomy" id="264203"/>
    <lineage>
        <taxon>Bacteria</taxon>
        <taxon>Pseudomonadati</taxon>
        <taxon>Pseudomonadota</taxon>
        <taxon>Alphaproteobacteria</taxon>
        <taxon>Sphingomonadales</taxon>
        <taxon>Zymomonadaceae</taxon>
        <taxon>Zymomonas</taxon>
    </lineage>
</organism>
<comment type="function">
    <text evidence="1">Inhibits all the catalytic activities of DNA gyrase by preventing its interaction with DNA. Acts by binding directly to the C-terminal domain of GyrB, which probably disrupts DNA binding by the gyrase.</text>
</comment>
<comment type="cofactor">
    <cofactor evidence="1">
        <name>Zn(2+)</name>
        <dbReference type="ChEBI" id="CHEBI:29105"/>
    </cofactor>
    <text evidence="1">Binds 1 zinc ion.</text>
</comment>
<comment type="subunit">
    <text evidence="1">Interacts with GyrB.</text>
</comment>
<comment type="similarity">
    <text evidence="1">Belongs to the DNA gyrase inhibitor YacG family.</text>
</comment>
<feature type="chain" id="PRO_0000211736" description="DNA gyrase inhibitor YacG">
    <location>
        <begin position="1"/>
        <end position="61"/>
    </location>
</feature>
<feature type="binding site" evidence="1">
    <location>
        <position position="14"/>
    </location>
    <ligand>
        <name>Zn(2+)</name>
        <dbReference type="ChEBI" id="CHEBI:29105"/>
    </ligand>
</feature>
<feature type="binding site" evidence="1">
    <location>
        <position position="17"/>
    </location>
    <ligand>
        <name>Zn(2+)</name>
        <dbReference type="ChEBI" id="CHEBI:29105"/>
    </ligand>
</feature>
<feature type="binding site" evidence="1">
    <location>
        <position position="29"/>
    </location>
    <ligand>
        <name>Zn(2+)</name>
        <dbReference type="ChEBI" id="CHEBI:29105"/>
    </ligand>
</feature>
<feature type="binding site" evidence="1">
    <location>
        <position position="33"/>
    </location>
    <ligand>
        <name>Zn(2+)</name>
        <dbReference type="ChEBI" id="CHEBI:29105"/>
    </ligand>
</feature>
<name>YACG_ZYMMO</name>
<proteinExistence type="inferred from homology"/>
<accession>Q5NNS5</accession>